<organism>
    <name type="scientific">Thermus thermophilus (strain ATCC BAA-163 / DSM 7039 / HB27)</name>
    <dbReference type="NCBI Taxonomy" id="262724"/>
    <lineage>
        <taxon>Bacteria</taxon>
        <taxon>Thermotogati</taxon>
        <taxon>Deinococcota</taxon>
        <taxon>Deinococci</taxon>
        <taxon>Thermales</taxon>
        <taxon>Thermaceae</taxon>
        <taxon>Thermus</taxon>
    </lineage>
</organism>
<dbReference type="EC" id="3.4.19.-" evidence="4"/>
<dbReference type="EMBL" id="AE017221">
    <property type="protein sequence ID" value="AAS81475.1"/>
    <property type="molecule type" value="Genomic_DNA"/>
</dbReference>
<dbReference type="SMR" id="Q72IJ9"/>
<dbReference type="KEGG" id="tth:TT_C1133"/>
<dbReference type="eggNOG" id="COG1310">
    <property type="taxonomic scope" value="Bacteria"/>
</dbReference>
<dbReference type="HOGENOM" id="CLU_116765_2_0_0"/>
<dbReference type="OrthoDB" id="9802958at2"/>
<dbReference type="Proteomes" id="UP000000592">
    <property type="component" value="Chromosome"/>
</dbReference>
<dbReference type="GO" id="GO:0008235">
    <property type="term" value="F:metalloexopeptidase activity"/>
    <property type="evidence" value="ECO:0007669"/>
    <property type="project" value="TreeGrafter"/>
</dbReference>
<dbReference type="GO" id="GO:0008270">
    <property type="term" value="F:zinc ion binding"/>
    <property type="evidence" value="ECO:0007669"/>
    <property type="project" value="TreeGrafter"/>
</dbReference>
<dbReference type="GO" id="GO:0006508">
    <property type="term" value="P:proteolysis"/>
    <property type="evidence" value="ECO:0007669"/>
    <property type="project" value="UniProtKB-KW"/>
</dbReference>
<dbReference type="CDD" id="cd08070">
    <property type="entry name" value="MPN_like"/>
    <property type="match status" value="1"/>
</dbReference>
<dbReference type="Gene3D" id="3.40.140.10">
    <property type="entry name" value="Cytidine Deaminase, domain 2"/>
    <property type="match status" value="1"/>
</dbReference>
<dbReference type="InterPro" id="IPR028090">
    <property type="entry name" value="JAB_dom_prok"/>
</dbReference>
<dbReference type="InterPro" id="IPR000555">
    <property type="entry name" value="JAMM/MPN+_dom"/>
</dbReference>
<dbReference type="InterPro" id="IPR051929">
    <property type="entry name" value="VirAsm_ModProt"/>
</dbReference>
<dbReference type="PANTHER" id="PTHR34858">
    <property type="entry name" value="CYSO-CYSTEINE PEPTIDASE"/>
    <property type="match status" value="1"/>
</dbReference>
<dbReference type="PANTHER" id="PTHR34858:SF1">
    <property type="entry name" value="CYSO-CYSTEINE PEPTIDASE"/>
    <property type="match status" value="1"/>
</dbReference>
<dbReference type="Pfam" id="PF14464">
    <property type="entry name" value="Prok-JAB"/>
    <property type="match status" value="1"/>
</dbReference>
<dbReference type="SMART" id="SM00232">
    <property type="entry name" value="JAB_MPN"/>
    <property type="match status" value="1"/>
</dbReference>
<dbReference type="SUPFAM" id="SSF102712">
    <property type="entry name" value="JAB1/MPN domain"/>
    <property type="match status" value="1"/>
</dbReference>
<sequence>MAPPSVPIVYAGGRGGCPGGYHGLVLYVPRGLLEETRAHLLREAPKEGVGLWAGRREVERVIPLPNVHPSPLTAYLADPLALLKALKALEREGLSLLAIYHSHPKGPALPSPRDIKEARWRVPYVIFGTDGVRAFLLPEGQEVALVVL</sequence>
<gene>
    <name evidence="5" type="ordered locus">TT_C1133</name>
</gene>
<comment type="function">
    <text evidence="4">Probable metalloprotease that cleaves the ubiquitin-like modifier protein TtuB from protein conjugates, hydrolyzing the isopeptide bond between a lysine residue of the target protein and the C-terminal glycine of the modifier protein. Does not seem to work for all the TtuB conjugates.</text>
</comment>
<comment type="cofactor">
    <cofactor evidence="1">
        <name>Zn(2+)</name>
        <dbReference type="ChEBI" id="CHEBI:29105"/>
    </cofactor>
    <text evidence="1">Binds 1 zinc ion per subunit.</text>
</comment>
<comment type="disruption phenotype">
    <text evidence="2">Cells lacking this gene show alteration of TtuB conjugation to TtuC and TtuA and about 50% decrease in 5-methyl-2-thiouridine (m(5)s(2)U or s(2)T) amounts in tRNA.</text>
</comment>
<comment type="similarity">
    <text evidence="3">Belongs to the peptidase M67B family.</text>
</comment>
<feature type="chain" id="PRO_0000442739" description="Probable TtuB-protein conjugate cleaving protease">
    <location>
        <begin position="1"/>
        <end position="148"/>
    </location>
</feature>
<feature type="domain" description="MPN" evidence="1">
    <location>
        <begin position="22"/>
        <end position="148"/>
    </location>
</feature>
<feature type="short sequence motif" description="JAMM motif" evidence="1 4">
    <location>
        <begin position="101"/>
        <end position="114"/>
    </location>
</feature>
<feature type="active site" description="Proton donor/acceptor" evidence="1">
    <location>
        <position position="47"/>
    </location>
</feature>
<feature type="binding site" evidence="1">
    <location>
        <position position="101"/>
    </location>
    <ligand>
        <name>Zn(2+)</name>
        <dbReference type="ChEBI" id="CHEBI:29105"/>
        <note>catalytic</note>
    </ligand>
</feature>
<feature type="binding site" evidence="1">
    <location>
        <position position="103"/>
    </location>
    <ligand>
        <name>Zn(2+)</name>
        <dbReference type="ChEBI" id="CHEBI:29105"/>
        <note>catalytic</note>
    </ligand>
</feature>
<feature type="binding site" evidence="1">
    <location>
        <position position="114"/>
    </location>
    <ligand>
        <name>Zn(2+)</name>
        <dbReference type="ChEBI" id="CHEBI:29105"/>
        <note>catalytic</note>
    </ligand>
</feature>
<feature type="site" description="Transition state stabilizer" evidence="1">
    <location>
        <position position="111"/>
    </location>
</feature>
<feature type="mutagenesis site" description="Loss of activity." evidence="2">
    <original>E</original>
    <variation>A</variation>
    <location>
        <position position="47"/>
    </location>
</feature>
<feature type="mutagenesis site" description="Loss of activity." evidence="2">
    <original>HSH</original>
    <variation>ASA</variation>
    <location>
        <begin position="101"/>
        <end position="103"/>
    </location>
</feature>
<keyword id="KW-0378">Hydrolase</keyword>
<keyword id="KW-0479">Metal-binding</keyword>
<keyword id="KW-0482">Metalloprotease</keyword>
<keyword id="KW-0645">Protease</keyword>
<keyword id="KW-0862">Zinc</keyword>
<name>JAMM1_THET2</name>
<accession>Q72IJ9</accession>
<reference key="1">
    <citation type="journal article" date="2004" name="Nat. Biotechnol.">
        <title>The genome sequence of the extreme thermophile Thermus thermophilus.</title>
        <authorList>
            <person name="Henne A."/>
            <person name="Brueggemann H."/>
            <person name="Raasch C."/>
            <person name="Wiezer A."/>
            <person name="Hartsch T."/>
            <person name="Liesegang H."/>
            <person name="Johann A."/>
            <person name="Lienard T."/>
            <person name="Gohl O."/>
            <person name="Martinez-Arias R."/>
            <person name="Jacobi C."/>
            <person name="Starkuviene V."/>
            <person name="Schlenczeck S."/>
            <person name="Dencker S."/>
            <person name="Huber R."/>
            <person name="Klenk H.-P."/>
            <person name="Kramer W."/>
            <person name="Merkl R."/>
            <person name="Gottschalk G."/>
            <person name="Fritz H.-J."/>
        </authorList>
    </citation>
    <scope>NUCLEOTIDE SEQUENCE [LARGE SCALE GENOMIC DNA]</scope>
    <source>
        <strain>ATCC BAA-163 / DSM 7039 / HB27</strain>
    </source>
</reference>
<reference key="2">
    <citation type="journal article" date="2012" name="J. Biol. Chem.">
        <title>Posttranslational modification of cellular proteins by a ubiquitin-like protein in bacteria.</title>
        <authorList>
            <person name="Shigi N."/>
        </authorList>
    </citation>
    <scope>FUNCTION</scope>
    <scope>DISRUPTION PHENOTYPE</scope>
    <scope>MUTAGENESIS OF GLU-47 AND 101-HIS--HIS-103</scope>
    <source>
        <strain>ATCC BAA-163 / DSM 7039 / HB27</strain>
    </source>
</reference>
<protein>
    <recommendedName>
        <fullName evidence="4">Probable TtuB-protein conjugate cleaving protease</fullName>
        <ecNumber evidence="4">3.4.19.-</ecNumber>
    </recommendedName>
</protein>
<proteinExistence type="evidence at protein level"/>
<evidence type="ECO:0000250" key="1">
    <source>
        <dbReference type="UniProtKB" id="D4GTS4"/>
    </source>
</evidence>
<evidence type="ECO:0000269" key="2">
    <source>
    </source>
</evidence>
<evidence type="ECO:0000305" key="3"/>
<evidence type="ECO:0000305" key="4">
    <source>
    </source>
</evidence>
<evidence type="ECO:0000312" key="5">
    <source>
        <dbReference type="EMBL" id="AAS81475.1"/>
    </source>
</evidence>